<dbReference type="EC" id="6.5.1.2" evidence="1"/>
<dbReference type="EMBL" id="CP001115">
    <property type="protein sequence ID" value="ACO47425.1"/>
    <property type="molecule type" value="Genomic_DNA"/>
</dbReference>
<dbReference type="RefSeq" id="WP_012694550.1">
    <property type="nucleotide sequence ID" value="NC_012527.1"/>
</dbReference>
<dbReference type="SMR" id="C1D1Y6"/>
<dbReference type="KEGG" id="ddr:Deide_1p00290"/>
<dbReference type="HOGENOM" id="CLU_007764_2_1_0"/>
<dbReference type="OrthoDB" id="9759736at2"/>
<dbReference type="Proteomes" id="UP000002208">
    <property type="component" value="Plasmid pDeide1"/>
</dbReference>
<dbReference type="GO" id="GO:0005829">
    <property type="term" value="C:cytosol"/>
    <property type="evidence" value="ECO:0007669"/>
    <property type="project" value="TreeGrafter"/>
</dbReference>
<dbReference type="GO" id="GO:0003677">
    <property type="term" value="F:DNA binding"/>
    <property type="evidence" value="ECO:0007669"/>
    <property type="project" value="InterPro"/>
</dbReference>
<dbReference type="GO" id="GO:0003911">
    <property type="term" value="F:DNA ligase (NAD+) activity"/>
    <property type="evidence" value="ECO:0007669"/>
    <property type="project" value="UniProtKB-UniRule"/>
</dbReference>
<dbReference type="GO" id="GO:0046872">
    <property type="term" value="F:metal ion binding"/>
    <property type="evidence" value="ECO:0007669"/>
    <property type="project" value="UniProtKB-KW"/>
</dbReference>
<dbReference type="GO" id="GO:0006281">
    <property type="term" value="P:DNA repair"/>
    <property type="evidence" value="ECO:0007669"/>
    <property type="project" value="UniProtKB-KW"/>
</dbReference>
<dbReference type="GO" id="GO:0006260">
    <property type="term" value="P:DNA replication"/>
    <property type="evidence" value="ECO:0007669"/>
    <property type="project" value="UniProtKB-KW"/>
</dbReference>
<dbReference type="CDD" id="cd00114">
    <property type="entry name" value="LIGANc"/>
    <property type="match status" value="1"/>
</dbReference>
<dbReference type="Gene3D" id="6.20.10.30">
    <property type="match status" value="1"/>
</dbReference>
<dbReference type="Gene3D" id="1.10.150.20">
    <property type="entry name" value="5' to 3' exonuclease, C-terminal subdomain"/>
    <property type="match status" value="2"/>
</dbReference>
<dbReference type="Gene3D" id="3.40.50.10190">
    <property type="entry name" value="BRCT domain"/>
    <property type="match status" value="1"/>
</dbReference>
<dbReference type="Gene3D" id="3.30.470.30">
    <property type="entry name" value="DNA ligase/mRNA capping enzyme"/>
    <property type="match status" value="1"/>
</dbReference>
<dbReference type="Gene3D" id="1.10.287.610">
    <property type="entry name" value="Helix hairpin bin"/>
    <property type="match status" value="1"/>
</dbReference>
<dbReference type="Gene3D" id="2.40.50.140">
    <property type="entry name" value="Nucleic acid-binding proteins"/>
    <property type="match status" value="1"/>
</dbReference>
<dbReference type="HAMAP" id="MF_01588">
    <property type="entry name" value="DNA_ligase_A"/>
    <property type="match status" value="1"/>
</dbReference>
<dbReference type="InterPro" id="IPR001357">
    <property type="entry name" value="BRCT_dom"/>
</dbReference>
<dbReference type="InterPro" id="IPR036420">
    <property type="entry name" value="BRCT_dom_sf"/>
</dbReference>
<dbReference type="InterPro" id="IPR041663">
    <property type="entry name" value="DisA/LigA_HHH"/>
</dbReference>
<dbReference type="InterPro" id="IPR001679">
    <property type="entry name" value="DNA_ligase"/>
</dbReference>
<dbReference type="InterPro" id="IPR013839">
    <property type="entry name" value="DNAligase_adenylation"/>
</dbReference>
<dbReference type="InterPro" id="IPR013840">
    <property type="entry name" value="DNAligase_N"/>
</dbReference>
<dbReference type="InterPro" id="IPR003583">
    <property type="entry name" value="Hlx-hairpin-Hlx_DNA-bd_motif"/>
</dbReference>
<dbReference type="InterPro" id="IPR012340">
    <property type="entry name" value="NA-bd_OB-fold"/>
</dbReference>
<dbReference type="InterPro" id="IPR004150">
    <property type="entry name" value="NAD_DNA_ligase_OB"/>
</dbReference>
<dbReference type="InterPro" id="IPR010994">
    <property type="entry name" value="RuvA_2-like"/>
</dbReference>
<dbReference type="InterPro" id="IPR004149">
    <property type="entry name" value="Znf_DNAligase_C4"/>
</dbReference>
<dbReference type="NCBIfam" id="TIGR00575">
    <property type="entry name" value="dnlj"/>
    <property type="match status" value="1"/>
</dbReference>
<dbReference type="NCBIfam" id="NF005932">
    <property type="entry name" value="PRK07956.1"/>
    <property type="match status" value="1"/>
</dbReference>
<dbReference type="PANTHER" id="PTHR23389">
    <property type="entry name" value="CHROMOSOME TRANSMISSION FIDELITY FACTOR 18"/>
    <property type="match status" value="1"/>
</dbReference>
<dbReference type="PANTHER" id="PTHR23389:SF9">
    <property type="entry name" value="DNA LIGASE"/>
    <property type="match status" value="1"/>
</dbReference>
<dbReference type="Pfam" id="PF00533">
    <property type="entry name" value="BRCT"/>
    <property type="match status" value="1"/>
</dbReference>
<dbReference type="Pfam" id="PF01653">
    <property type="entry name" value="DNA_ligase_aden"/>
    <property type="match status" value="1"/>
</dbReference>
<dbReference type="Pfam" id="PF03120">
    <property type="entry name" value="DNA_ligase_OB"/>
    <property type="match status" value="1"/>
</dbReference>
<dbReference type="Pfam" id="PF03119">
    <property type="entry name" value="DNA_ligase_ZBD"/>
    <property type="match status" value="1"/>
</dbReference>
<dbReference type="Pfam" id="PF12826">
    <property type="entry name" value="HHH_2"/>
    <property type="match status" value="1"/>
</dbReference>
<dbReference type="Pfam" id="PF14520">
    <property type="entry name" value="HHH_5"/>
    <property type="match status" value="1"/>
</dbReference>
<dbReference type="Pfam" id="PF22745">
    <property type="entry name" value="Nlig-Ia"/>
    <property type="match status" value="1"/>
</dbReference>
<dbReference type="PIRSF" id="PIRSF001604">
    <property type="entry name" value="LigA"/>
    <property type="match status" value="1"/>
</dbReference>
<dbReference type="SMART" id="SM00292">
    <property type="entry name" value="BRCT"/>
    <property type="match status" value="1"/>
</dbReference>
<dbReference type="SMART" id="SM00278">
    <property type="entry name" value="HhH1"/>
    <property type="match status" value="2"/>
</dbReference>
<dbReference type="SMART" id="SM00532">
    <property type="entry name" value="LIGANc"/>
    <property type="match status" value="1"/>
</dbReference>
<dbReference type="SUPFAM" id="SSF52113">
    <property type="entry name" value="BRCT domain"/>
    <property type="match status" value="1"/>
</dbReference>
<dbReference type="SUPFAM" id="SSF56091">
    <property type="entry name" value="DNA ligase/mRNA capping enzyme, catalytic domain"/>
    <property type="match status" value="1"/>
</dbReference>
<dbReference type="SUPFAM" id="SSF50249">
    <property type="entry name" value="Nucleic acid-binding proteins"/>
    <property type="match status" value="1"/>
</dbReference>
<dbReference type="SUPFAM" id="SSF47781">
    <property type="entry name" value="RuvA domain 2-like"/>
    <property type="match status" value="1"/>
</dbReference>
<dbReference type="PROSITE" id="PS50172">
    <property type="entry name" value="BRCT"/>
    <property type="match status" value="1"/>
</dbReference>
<name>DNLJ1_DEIDV</name>
<proteinExistence type="inferred from homology"/>
<organism>
    <name type="scientific">Deinococcus deserti (strain DSM 17065 / CIP 109153 / LMG 22923 / VCD115)</name>
    <dbReference type="NCBI Taxonomy" id="546414"/>
    <lineage>
        <taxon>Bacteria</taxon>
        <taxon>Thermotogati</taxon>
        <taxon>Deinococcota</taxon>
        <taxon>Deinococci</taxon>
        <taxon>Deinococcales</taxon>
        <taxon>Deinococcaceae</taxon>
        <taxon>Deinococcus</taxon>
    </lineage>
</organism>
<feature type="chain" id="PRO_0000380357" description="DNA ligase 1">
    <location>
        <begin position="1"/>
        <end position="686"/>
    </location>
</feature>
<feature type="domain" description="BRCT" evidence="1">
    <location>
        <begin position="602"/>
        <end position="686"/>
    </location>
</feature>
<feature type="active site" description="N6-AMP-lysine intermediate" evidence="1">
    <location>
        <position position="121"/>
    </location>
</feature>
<feature type="binding site" evidence="1">
    <location>
        <begin position="35"/>
        <end position="39"/>
    </location>
    <ligand>
        <name>NAD(+)</name>
        <dbReference type="ChEBI" id="CHEBI:57540"/>
    </ligand>
</feature>
<feature type="binding site" evidence="1">
    <location>
        <begin position="84"/>
        <end position="85"/>
    </location>
    <ligand>
        <name>NAD(+)</name>
        <dbReference type="ChEBI" id="CHEBI:57540"/>
    </ligand>
</feature>
<feature type="binding site" evidence="1">
    <location>
        <position position="119"/>
    </location>
    <ligand>
        <name>NAD(+)</name>
        <dbReference type="ChEBI" id="CHEBI:57540"/>
    </ligand>
</feature>
<feature type="binding site" evidence="1">
    <location>
        <position position="142"/>
    </location>
    <ligand>
        <name>NAD(+)</name>
        <dbReference type="ChEBI" id="CHEBI:57540"/>
    </ligand>
</feature>
<feature type="binding site" evidence="1">
    <location>
        <position position="177"/>
    </location>
    <ligand>
        <name>NAD(+)</name>
        <dbReference type="ChEBI" id="CHEBI:57540"/>
    </ligand>
</feature>
<feature type="binding site" evidence="1">
    <location>
        <position position="293"/>
    </location>
    <ligand>
        <name>NAD(+)</name>
        <dbReference type="ChEBI" id="CHEBI:57540"/>
    </ligand>
</feature>
<feature type="binding site" evidence="1">
    <location>
        <position position="317"/>
    </location>
    <ligand>
        <name>NAD(+)</name>
        <dbReference type="ChEBI" id="CHEBI:57540"/>
    </ligand>
</feature>
<feature type="binding site" evidence="1">
    <location>
        <position position="411"/>
    </location>
    <ligand>
        <name>Zn(2+)</name>
        <dbReference type="ChEBI" id="CHEBI:29105"/>
    </ligand>
</feature>
<feature type="binding site" evidence="1">
    <location>
        <position position="414"/>
    </location>
    <ligand>
        <name>Zn(2+)</name>
        <dbReference type="ChEBI" id="CHEBI:29105"/>
    </ligand>
</feature>
<feature type="binding site" evidence="1">
    <location>
        <position position="429"/>
    </location>
    <ligand>
        <name>Zn(2+)</name>
        <dbReference type="ChEBI" id="CHEBI:29105"/>
    </ligand>
</feature>
<feature type="binding site" evidence="1">
    <location>
        <position position="434"/>
    </location>
    <ligand>
        <name>Zn(2+)</name>
        <dbReference type="ChEBI" id="CHEBI:29105"/>
    </ligand>
</feature>
<evidence type="ECO:0000255" key="1">
    <source>
        <dbReference type="HAMAP-Rule" id="MF_01588"/>
    </source>
</evidence>
<comment type="function">
    <text evidence="1">DNA ligase that catalyzes the formation of phosphodiester linkages between 5'-phosphoryl and 3'-hydroxyl groups in double-stranded DNA using NAD as a coenzyme and as the energy source for the reaction. It is essential for DNA replication and repair of damaged DNA.</text>
</comment>
<comment type="catalytic activity">
    <reaction evidence="1">
        <text>NAD(+) + (deoxyribonucleotide)n-3'-hydroxyl + 5'-phospho-(deoxyribonucleotide)m = (deoxyribonucleotide)n+m + AMP + beta-nicotinamide D-nucleotide.</text>
        <dbReference type="EC" id="6.5.1.2"/>
    </reaction>
</comment>
<comment type="cofactor">
    <cofactor evidence="1">
        <name>Mg(2+)</name>
        <dbReference type="ChEBI" id="CHEBI:18420"/>
    </cofactor>
    <cofactor evidence="1">
        <name>Mn(2+)</name>
        <dbReference type="ChEBI" id="CHEBI:29035"/>
    </cofactor>
</comment>
<comment type="similarity">
    <text evidence="1">Belongs to the NAD-dependent DNA ligase family. LigA subfamily.</text>
</comment>
<sequence>MTQSSTPAERHAWLTQKVAEHNRRYYEEDAPTIPDFEYDALVRELRELEARHPEFAAPTSPAQTVGGRPSTLFEKVRHPTPMTSLDNAFSDAELAHFDDKVARALNLPPGSRTFTYTCELKIDGLSINLYYVDGILQWAATRGDGEVGEKVTANIEGIPGIPTQLPGLQGELEVRGEVYMSKATFLAYNLKAEEEGRPLLKNPRNGAAGALRQKDPAETRRRGLEVILYALGKRDGVPVRTQWDILEWLRAQGFATSEYARRVTGSEAAAAYHAEMTAQRPQLPFDADGSVVKLDDLRLQEDAGYTSRAPKWAVAYKFPADVAQTVIEAITIQTGRTGKLTPVAELRPVLLEGTTVARATLHNEDFIRGLDLHVGDTVRVHKSGGIIPEVLGVVLEQRPEGSTPYAFPTHCPVCGHEAVRHEGAAGTFCTNPACPAKSTLRVRYFASRDVMDIKGLGERLVEQLVDAGLVRDPADLYALTAEQIEHLEMGETTTGGVRRVGRKNAEKLVAEIEASKTRELWRVFRSLGLPYVGEGTATRIARVYRSLEDIRQASVDDLARIPDVGRQVAEGIVQGLRDADMCAYLDRLTAAGVQPTPSVDVRVGEQLAGLTFVVTGTLSVPRDVIKLHLGQYGARVSGSVTKKTSYLIAGEDAGSKLEKATELKVPVLDEAGLQKLLAEKGAPPLP</sequence>
<reference key="1">
    <citation type="journal article" date="2009" name="PLoS Genet.">
        <title>Alliance of proteomics and genomics to unravel the specificities of Sahara bacterium Deinococcus deserti.</title>
        <authorList>
            <person name="de Groot A."/>
            <person name="Dulermo R."/>
            <person name="Ortet P."/>
            <person name="Blanchard L."/>
            <person name="Guerin P."/>
            <person name="Fernandez B."/>
            <person name="Vacherie B."/>
            <person name="Dossat C."/>
            <person name="Jolivet E."/>
            <person name="Siguier P."/>
            <person name="Chandler M."/>
            <person name="Barakat M."/>
            <person name="Dedieu A."/>
            <person name="Barbe V."/>
            <person name="Heulin T."/>
            <person name="Sommer S."/>
            <person name="Achouak W."/>
            <person name="Armengaud J."/>
        </authorList>
    </citation>
    <scope>NUCLEOTIDE SEQUENCE [LARGE SCALE GENOMIC DNA]</scope>
    <source>
        <strain>DSM 17065 / CIP 109153 / LMG 22923 / VCD115</strain>
    </source>
</reference>
<gene>
    <name evidence="1" type="primary">ligA1</name>
    <name type="ordered locus">Deide_1p00290</name>
</gene>
<protein>
    <recommendedName>
        <fullName evidence="1">DNA ligase 1</fullName>
        <ecNumber evidence="1">6.5.1.2</ecNumber>
    </recommendedName>
    <alternativeName>
        <fullName evidence="1">Polydeoxyribonucleotide synthase [NAD(+)] 1</fullName>
    </alternativeName>
</protein>
<accession>C1D1Y6</accession>
<geneLocation type="plasmid">
    <name>pDeide1</name>
</geneLocation>
<keyword id="KW-0227">DNA damage</keyword>
<keyword id="KW-0234">DNA repair</keyword>
<keyword id="KW-0235">DNA replication</keyword>
<keyword id="KW-0436">Ligase</keyword>
<keyword id="KW-0460">Magnesium</keyword>
<keyword id="KW-0464">Manganese</keyword>
<keyword id="KW-0479">Metal-binding</keyword>
<keyword id="KW-0520">NAD</keyword>
<keyword id="KW-0614">Plasmid</keyword>
<keyword id="KW-1185">Reference proteome</keyword>
<keyword id="KW-0862">Zinc</keyword>